<name>BTUD_ECODH</name>
<keyword id="KW-0067">ATP-binding</keyword>
<keyword id="KW-0997">Cell inner membrane</keyword>
<keyword id="KW-1003">Cell membrane</keyword>
<keyword id="KW-0472">Membrane</keyword>
<keyword id="KW-0547">Nucleotide-binding</keyword>
<keyword id="KW-1278">Translocase</keyword>
<keyword id="KW-0813">Transport</keyword>
<evidence type="ECO:0000255" key="1">
    <source>
        <dbReference type="HAMAP-Rule" id="MF_01005"/>
    </source>
</evidence>
<sequence length="249" mass="27081">MSIVMQLQDVAESTRLGPLSGEVRAGEILHLVGPNGAGKSTLLARMAGMTSGKGSIQFAGQPLEAWSATKLALHRAYLSQQQTPPFATPVWHYLTLHQHDKTRTELLNDVAGALALDDKLGRSTNQLSGGEWQRVRLAAVVLQITPQANPAGQLLLLDEPMNSLDVAQQSALDKILSALCQQGLAIVMSSHDLNHTLRHAHRAWLLKGGKMLASGRREEVLTPPNLAQAYGMNFRRLDIEGHRMLISTI</sequence>
<reference key="1">
    <citation type="journal article" date="2008" name="J. Bacteriol.">
        <title>The complete genome sequence of Escherichia coli DH10B: insights into the biology of a laboratory workhorse.</title>
        <authorList>
            <person name="Durfee T."/>
            <person name="Nelson R."/>
            <person name="Baldwin S."/>
            <person name="Plunkett G. III"/>
            <person name="Burland V."/>
            <person name="Mau B."/>
            <person name="Petrosino J.F."/>
            <person name="Qin X."/>
            <person name="Muzny D.M."/>
            <person name="Ayele M."/>
            <person name="Gibbs R.A."/>
            <person name="Csorgo B."/>
            <person name="Posfai G."/>
            <person name="Weinstock G.M."/>
            <person name="Blattner F.R."/>
        </authorList>
    </citation>
    <scope>NUCLEOTIDE SEQUENCE [LARGE SCALE GENOMIC DNA]</scope>
    <source>
        <strain>K12 / DH10B</strain>
    </source>
</reference>
<dbReference type="EC" id="7.6.2.8" evidence="1"/>
<dbReference type="EMBL" id="CP000948">
    <property type="protein sequence ID" value="ACB02910.1"/>
    <property type="molecule type" value="Genomic_DNA"/>
</dbReference>
<dbReference type="RefSeq" id="WP_000029474.1">
    <property type="nucleotide sequence ID" value="NC_010473.1"/>
</dbReference>
<dbReference type="SMR" id="B1XG16"/>
<dbReference type="KEGG" id="ecd:ECDH10B_1845"/>
<dbReference type="HOGENOM" id="CLU_000604_1_11_6"/>
<dbReference type="GO" id="GO:0005886">
    <property type="term" value="C:plasma membrane"/>
    <property type="evidence" value="ECO:0007669"/>
    <property type="project" value="UniProtKB-SubCell"/>
</dbReference>
<dbReference type="GO" id="GO:0015420">
    <property type="term" value="F:ABC-type vitamin B12 transporter activity"/>
    <property type="evidence" value="ECO:0007669"/>
    <property type="project" value="UniProtKB-UniRule"/>
</dbReference>
<dbReference type="GO" id="GO:0005524">
    <property type="term" value="F:ATP binding"/>
    <property type="evidence" value="ECO:0007669"/>
    <property type="project" value="UniProtKB-KW"/>
</dbReference>
<dbReference type="GO" id="GO:0016887">
    <property type="term" value="F:ATP hydrolysis activity"/>
    <property type="evidence" value="ECO:0007669"/>
    <property type="project" value="InterPro"/>
</dbReference>
<dbReference type="CDD" id="cd03214">
    <property type="entry name" value="ABC_Iron-Siderophores_B12_Hemin"/>
    <property type="match status" value="1"/>
</dbReference>
<dbReference type="FunFam" id="3.40.50.300:FF:000462">
    <property type="entry name" value="Vitamin B12 import ATP-binding protein BtuD"/>
    <property type="match status" value="1"/>
</dbReference>
<dbReference type="Gene3D" id="3.40.50.300">
    <property type="entry name" value="P-loop containing nucleotide triphosphate hydrolases"/>
    <property type="match status" value="1"/>
</dbReference>
<dbReference type="HAMAP" id="MF_01005">
    <property type="entry name" value="BtuD"/>
    <property type="match status" value="1"/>
</dbReference>
<dbReference type="InterPro" id="IPR003593">
    <property type="entry name" value="AAA+_ATPase"/>
</dbReference>
<dbReference type="InterPro" id="IPR003439">
    <property type="entry name" value="ABC_transporter-like_ATP-bd"/>
</dbReference>
<dbReference type="InterPro" id="IPR017871">
    <property type="entry name" value="ABC_transporter-like_CS"/>
</dbReference>
<dbReference type="InterPro" id="IPR023693">
    <property type="entry name" value="ABC_transptr_BtuD"/>
</dbReference>
<dbReference type="InterPro" id="IPR050153">
    <property type="entry name" value="Metal_Ion_Import_ABC"/>
</dbReference>
<dbReference type="InterPro" id="IPR027417">
    <property type="entry name" value="P-loop_NTPase"/>
</dbReference>
<dbReference type="NCBIfam" id="NF002981">
    <property type="entry name" value="PRK03695.1"/>
    <property type="match status" value="1"/>
</dbReference>
<dbReference type="PANTHER" id="PTHR42734">
    <property type="entry name" value="METAL TRANSPORT SYSTEM ATP-BINDING PROTEIN TM_0124-RELATED"/>
    <property type="match status" value="1"/>
</dbReference>
<dbReference type="PANTHER" id="PTHR42734:SF18">
    <property type="entry name" value="VITAMIN B12 IMPORT ATP-BINDING PROTEIN BTUD"/>
    <property type="match status" value="1"/>
</dbReference>
<dbReference type="Pfam" id="PF00005">
    <property type="entry name" value="ABC_tran"/>
    <property type="match status" value="1"/>
</dbReference>
<dbReference type="SMART" id="SM00382">
    <property type="entry name" value="AAA"/>
    <property type="match status" value="1"/>
</dbReference>
<dbReference type="SUPFAM" id="SSF52540">
    <property type="entry name" value="P-loop containing nucleoside triphosphate hydrolases"/>
    <property type="match status" value="1"/>
</dbReference>
<dbReference type="PROSITE" id="PS00211">
    <property type="entry name" value="ABC_TRANSPORTER_1"/>
    <property type="match status" value="1"/>
</dbReference>
<dbReference type="PROSITE" id="PS50893">
    <property type="entry name" value="ABC_TRANSPORTER_2"/>
    <property type="match status" value="1"/>
</dbReference>
<accession>B1XG16</accession>
<feature type="chain" id="PRO_1000134662" description="Vitamin B12 import ATP-binding protein BtuD">
    <location>
        <begin position="1"/>
        <end position="249"/>
    </location>
</feature>
<feature type="domain" description="ABC transporter" evidence="1">
    <location>
        <begin position="1"/>
        <end position="233"/>
    </location>
</feature>
<feature type="binding site" evidence="1">
    <location>
        <begin position="33"/>
        <end position="40"/>
    </location>
    <ligand>
        <name>ATP</name>
        <dbReference type="ChEBI" id="CHEBI:30616"/>
    </ligand>
</feature>
<proteinExistence type="inferred from homology"/>
<comment type="function">
    <text evidence="1">Part of the ABC transporter complex BtuCDF involved in vitamin B12 import. Responsible for energy coupling to the transport system.</text>
</comment>
<comment type="catalytic activity">
    <reaction evidence="1">
        <text>an R-cob(III)alamin(out) + ATP + H2O = an R-cob(III)alamin(in) + ADP + phosphate + H(+)</text>
        <dbReference type="Rhea" id="RHEA:17873"/>
        <dbReference type="ChEBI" id="CHEBI:15377"/>
        <dbReference type="ChEBI" id="CHEBI:15378"/>
        <dbReference type="ChEBI" id="CHEBI:30616"/>
        <dbReference type="ChEBI" id="CHEBI:43474"/>
        <dbReference type="ChEBI" id="CHEBI:140785"/>
        <dbReference type="ChEBI" id="CHEBI:456216"/>
        <dbReference type="EC" id="7.6.2.8"/>
    </reaction>
</comment>
<comment type="subunit">
    <text evidence="1">The complex is composed of two ATP-binding proteins (BtuD), two transmembrane proteins (BtuC) and a solute-binding protein (BtuF).</text>
</comment>
<comment type="subcellular location">
    <subcellularLocation>
        <location evidence="1">Cell inner membrane</location>
        <topology evidence="1">Peripheral membrane protein</topology>
    </subcellularLocation>
</comment>
<comment type="similarity">
    <text evidence="1">Belongs to the ABC transporter superfamily. Vitamin B12 importer (TC 3.A.1.13.1) family.</text>
</comment>
<gene>
    <name evidence="1" type="primary">btuD</name>
    <name type="ordered locus">ECDH10B_1845</name>
</gene>
<protein>
    <recommendedName>
        <fullName evidence="1">Vitamin B12 import ATP-binding protein BtuD</fullName>
        <ecNumber evidence="1">7.6.2.8</ecNumber>
    </recommendedName>
    <alternativeName>
        <fullName evidence="1">Vitamin B12-transporting ATPase</fullName>
    </alternativeName>
</protein>
<organism>
    <name type="scientific">Escherichia coli (strain K12 / DH10B)</name>
    <dbReference type="NCBI Taxonomy" id="316385"/>
    <lineage>
        <taxon>Bacteria</taxon>
        <taxon>Pseudomonadati</taxon>
        <taxon>Pseudomonadota</taxon>
        <taxon>Gammaproteobacteria</taxon>
        <taxon>Enterobacterales</taxon>
        <taxon>Enterobacteriaceae</taxon>
        <taxon>Escherichia</taxon>
    </lineage>
</organism>